<feature type="chain" id="PRO_0000151675" description="Hydroxylamine reductase">
    <location>
        <begin position="1"/>
        <end position="550"/>
    </location>
</feature>
<feature type="binding site" evidence="1">
    <location>
        <position position="3"/>
    </location>
    <ligand>
        <name>[2Fe-2S] cluster</name>
        <dbReference type="ChEBI" id="CHEBI:190135"/>
    </ligand>
</feature>
<feature type="binding site" evidence="1">
    <location>
        <position position="6"/>
    </location>
    <ligand>
        <name>[2Fe-2S] cluster</name>
        <dbReference type="ChEBI" id="CHEBI:190135"/>
    </ligand>
</feature>
<feature type="binding site" evidence="1">
    <location>
        <position position="18"/>
    </location>
    <ligand>
        <name>[2Fe-2S] cluster</name>
        <dbReference type="ChEBI" id="CHEBI:190135"/>
    </ligand>
</feature>
<feature type="binding site" evidence="1">
    <location>
        <position position="25"/>
    </location>
    <ligand>
        <name>[2Fe-2S] cluster</name>
        <dbReference type="ChEBI" id="CHEBI:190135"/>
    </ligand>
</feature>
<feature type="binding site" evidence="1">
    <location>
        <position position="249"/>
    </location>
    <ligand>
        <name>hybrid [4Fe-2O-2S] cluster</name>
        <dbReference type="ChEBI" id="CHEBI:60519"/>
    </ligand>
</feature>
<feature type="binding site" evidence="1">
    <location>
        <position position="273"/>
    </location>
    <ligand>
        <name>hybrid [4Fe-2O-2S] cluster</name>
        <dbReference type="ChEBI" id="CHEBI:60519"/>
    </ligand>
</feature>
<feature type="binding site" evidence="1">
    <location>
        <position position="317"/>
    </location>
    <ligand>
        <name>hybrid [4Fe-2O-2S] cluster</name>
        <dbReference type="ChEBI" id="CHEBI:60519"/>
    </ligand>
</feature>
<feature type="binding site" description="via persulfide group" evidence="1">
    <location>
        <position position="405"/>
    </location>
    <ligand>
        <name>hybrid [4Fe-2O-2S] cluster</name>
        <dbReference type="ChEBI" id="CHEBI:60519"/>
    </ligand>
</feature>
<feature type="binding site" evidence="1">
    <location>
        <position position="433"/>
    </location>
    <ligand>
        <name>hybrid [4Fe-2O-2S] cluster</name>
        <dbReference type="ChEBI" id="CHEBI:60519"/>
    </ligand>
</feature>
<feature type="binding site" evidence="1">
    <location>
        <position position="458"/>
    </location>
    <ligand>
        <name>hybrid [4Fe-2O-2S] cluster</name>
        <dbReference type="ChEBI" id="CHEBI:60519"/>
    </ligand>
</feature>
<feature type="binding site" evidence="1">
    <location>
        <position position="492"/>
    </location>
    <ligand>
        <name>hybrid [4Fe-2O-2S] cluster</name>
        <dbReference type="ChEBI" id="CHEBI:60519"/>
    </ligand>
</feature>
<feature type="binding site" evidence="1">
    <location>
        <position position="494"/>
    </location>
    <ligand>
        <name>hybrid [4Fe-2O-2S] cluster</name>
        <dbReference type="ChEBI" id="CHEBI:60519"/>
    </ligand>
</feature>
<feature type="modified residue" description="Cysteine persulfide" evidence="1">
    <location>
        <position position="405"/>
    </location>
</feature>
<comment type="function">
    <text evidence="1">Catalyzes the reduction of hydroxylamine to form NH(3) and H(2)O.</text>
</comment>
<comment type="catalytic activity">
    <reaction evidence="1">
        <text>A + NH4(+) + H2O = hydroxylamine + AH2 + H(+)</text>
        <dbReference type="Rhea" id="RHEA:22052"/>
        <dbReference type="ChEBI" id="CHEBI:13193"/>
        <dbReference type="ChEBI" id="CHEBI:15377"/>
        <dbReference type="ChEBI" id="CHEBI:15378"/>
        <dbReference type="ChEBI" id="CHEBI:15429"/>
        <dbReference type="ChEBI" id="CHEBI:17499"/>
        <dbReference type="ChEBI" id="CHEBI:28938"/>
        <dbReference type="EC" id="1.7.99.1"/>
    </reaction>
</comment>
<comment type="cofactor">
    <cofactor evidence="1">
        <name>[2Fe-2S] cluster</name>
        <dbReference type="ChEBI" id="CHEBI:190135"/>
    </cofactor>
    <text evidence="1">Binds 1 [2Fe-2S] cluster.</text>
</comment>
<comment type="cofactor">
    <cofactor evidence="1">
        <name>hybrid [4Fe-2O-2S] cluster</name>
        <dbReference type="ChEBI" id="CHEBI:60519"/>
    </cofactor>
    <text evidence="1">Binds 1 hybrid [4Fe-2O-2S] cluster.</text>
</comment>
<comment type="subcellular location">
    <subcellularLocation>
        <location evidence="1">Cytoplasm</location>
    </subcellularLocation>
</comment>
<comment type="similarity">
    <text evidence="1">Belongs to the HCP family.</text>
</comment>
<comment type="sequence caution" evidence="2">
    <conflict type="erroneous initiation">
        <sequence resource="EMBL-CDS" id="AAN79479"/>
    </conflict>
    <text>Extended N-terminus.</text>
</comment>
<name>HCP_ECOL6</name>
<keyword id="KW-0001">2Fe-2S</keyword>
<keyword id="KW-0963">Cytoplasm</keyword>
<keyword id="KW-0408">Iron</keyword>
<keyword id="KW-0411">Iron-sulfur</keyword>
<keyword id="KW-0479">Metal-binding</keyword>
<keyword id="KW-0560">Oxidoreductase</keyword>
<keyword id="KW-1185">Reference proteome</keyword>
<proteinExistence type="inferred from homology"/>
<reference key="1">
    <citation type="journal article" date="2002" name="Proc. Natl. Acad. Sci. U.S.A.">
        <title>Extensive mosaic structure revealed by the complete genome sequence of uropathogenic Escherichia coli.</title>
        <authorList>
            <person name="Welch R.A."/>
            <person name="Burland V."/>
            <person name="Plunkett G. III"/>
            <person name="Redford P."/>
            <person name="Roesch P."/>
            <person name="Rasko D."/>
            <person name="Buckles E.L."/>
            <person name="Liou S.-R."/>
            <person name="Boutin A."/>
            <person name="Hackett J."/>
            <person name="Stroud D."/>
            <person name="Mayhew G.F."/>
            <person name="Rose D.J."/>
            <person name="Zhou S."/>
            <person name="Schwartz D.C."/>
            <person name="Perna N.T."/>
            <person name="Mobley H.L.T."/>
            <person name="Donnenberg M.S."/>
            <person name="Blattner F.R."/>
        </authorList>
    </citation>
    <scope>NUCLEOTIDE SEQUENCE [LARGE SCALE GENOMIC DNA]</scope>
    <source>
        <strain>CFT073 / ATCC 700928 / UPEC</strain>
    </source>
</reference>
<organism>
    <name type="scientific">Escherichia coli O6:H1 (strain CFT073 / ATCC 700928 / UPEC)</name>
    <dbReference type="NCBI Taxonomy" id="199310"/>
    <lineage>
        <taxon>Bacteria</taxon>
        <taxon>Pseudomonadati</taxon>
        <taxon>Pseudomonadota</taxon>
        <taxon>Gammaproteobacteria</taxon>
        <taxon>Enterobacterales</taxon>
        <taxon>Enterobacteriaceae</taxon>
        <taxon>Escherichia</taxon>
    </lineage>
</organism>
<evidence type="ECO:0000255" key="1">
    <source>
        <dbReference type="HAMAP-Rule" id="MF_00069"/>
    </source>
</evidence>
<evidence type="ECO:0000305" key="2"/>
<protein>
    <recommendedName>
        <fullName evidence="1">Hydroxylamine reductase</fullName>
        <ecNumber evidence="1">1.7.99.1</ecNumber>
    </recommendedName>
    <alternativeName>
        <fullName evidence="1">Hybrid-cluster protein</fullName>
        <shortName evidence="1">HCP</shortName>
    </alternativeName>
    <alternativeName>
        <fullName evidence="1">Prismane protein</fullName>
    </alternativeName>
</protein>
<gene>
    <name evidence="1" type="primary">hcp</name>
    <name type="ordered locus">c1006</name>
</gene>
<dbReference type="EC" id="1.7.99.1" evidence="1"/>
<dbReference type="EMBL" id="AE014075">
    <property type="protein sequence ID" value="AAN79479.1"/>
    <property type="status" value="ALT_INIT"/>
    <property type="molecule type" value="Genomic_DNA"/>
</dbReference>
<dbReference type="RefSeq" id="WP_000458843.1">
    <property type="nucleotide sequence ID" value="NZ_CP051263.1"/>
</dbReference>
<dbReference type="SMR" id="Q8FJE0"/>
<dbReference type="STRING" id="199310.c1006"/>
<dbReference type="KEGG" id="ecc:c1006"/>
<dbReference type="eggNOG" id="COG1151">
    <property type="taxonomic scope" value="Bacteria"/>
</dbReference>
<dbReference type="HOGENOM" id="CLU_038344_2_0_6"/>
<dbReference type="Proteomes" id="UP000001410">
    <property type="component" value="Chromosome"/>
</dbReference>
<dbReference type="GO" id="GO:0005737">
    <property type="term" value="C:cytoplasm"/>
    <property type="evidence" value="ECO:0007669"/>
    <property type="project" value="UniProtKB-SubCell"/>
</dbReference>
<dbReference type="GO" id="GO:0051537">
    <property type="term" value="F:2 iron, 2 sulfur cluster binding"/>
    <property type="evidence" value="ECO:0007669"/>
    <property type="project" value="UniProtKB-KW"/>
</dbReference>
<dbReference type="GO" id="GO:0050418">
    <property type="term" value="F:hydroxylamine reductase activity"/>
    <property type="evidence" value="ECO:0007669"/>
    <property type="project" value="UniProtKB-UniRule"/>
</dbReference>
<dbReference type="GO" id="GO:0046872">
    <property type="term" value="F:metal ion binding"/>
    <property type="evidence" value="ECO:0007669"/>
    <property type="project" value="UniProtKB-KW"/>
</dbReference>
<dbReference type="GO" id="GO:0004601">
    <property type="term" value="F:peroxidase activity"/>
    <property type="evidence" value="ECO:0007669"/>
    <property type="project" value="TreeGrafter"/>
</dbReference>
<dbReference type="GO" id="GO:0042542">
    <property type="term" value="P:response to hydrogen peroxide"/>
    <property type="evidence" value="ECO:0007669"/>
    <property type="project" value="TreeGrafter"/>
</dbReference>
<dbReference type="CDD" id="cd01914">
    <property type="entry name" value="HCP"/>
    <property type="match status" value="1"/>
</dbReference>
<dbReference type="FunFam" id="1.20.1270.20:FF:000001">
    <property type="entry name" value="Hydroxylamine reductase"/>
    <property type="match status" value="1"/>
</dbReference>
<dbReference type="FunFam" id="1.20.1270.20:FF:000002">
    <property type="entry name" value="Hydroxylamine reductase"/>
    <property type="match status" value="1"/>
</dbReference>
<dbReference type="FunFam" id="3.40.50.2030:FF:000001">
    <property type="entry name" value="Hydroxylamine reductase"/>
    <property type="match status" value="1"/>
</dbReference>
<dbReference type="FunFam" id="3.40.50.2030:FF:000002">
    <property type="entry name" value="Hydroxylamine reductase"/>
    <property type="match status" value="1"/>
</dbReference>
<dbReference type="Gene3D" id="1.20.1270.20">
    <property type="match status" value="2"/>
</dbReference>
<dbReference type="Gene3D" id="3.40.50.2030">
    <property type="match status" value="2"/>
</dbReference>
<dbReference type="HAMAP" id="MF_00069">
    <property type="entry name" value="Hydroxylam_reduct"/>
    <property type="match status" value="1"/>
</dbReference>
<dbReference type="InterPro" id="IPR004137">
    <property type="entry name" value="HCP/CODH"/>
</dbReference>
<dbReference type="InterPro" id="IPR010048">
    <property type="entry name" value="Hydroxylam_reduct"/>
</dbReference>
<dbReference type="InterPro" id="IPR016099">
    <property type="entry name" value="Prismane-like_a/b-sand"/>
</dbReference>
<dbReference type="InterPro" id="IPR011254">
    <property type="entry name" value="Prismane-like_sf"/>
</dbReference>
<dbReference type="InterPro" id="IPR016100">
    <property type="entry name" value="Prismane_a-bundle"/>
</dbReference>
<dbReference type="NCBIfam" id="TIGR01703">
    <property type="entry name" value="hybrid_clust"/>
    <property type="match status" value="1"/>
</dbReference>
<dbReference type="NCBIfam" id="NF003658">
    <property type="entry name" value="PRK05290.1"/>
    <property type="match status" value="1"/>
</dbReference>
<dbReference type="PANTHER" id="PTHR30109">
    <property type="entry name" value="HYDROXYLAMINE REDUCTASE"/>
    <property type="match status" value="1"/>
</dbReference>
<dbReference type="PANTHER" id="PTHR30109:SF0">
    <property type="entry name" value="HYDROXYLAMINE REDUCTASE"/>
    <property type="match status" value="1"/>
</dbReference>
<dbReference type="Pfam" id="PF03063">
    <property type="entry name" value="Prismane"/>
    <property type="match status" value="1"/>
</dbReference>
<dbReference type="PIRSF" id="PIRSF000076">
    <property type="entry name" value="HCP"/>
    <property type="match status" value="1"/>
</dbReference>
<dbReference type="SUPFAM" id="SSF56821">
    <property type="entry name" value="Prismane protein-like"/>
    <property type="match status" value="1"/>
</dbReference>
<sequence length="550" mass="60078">MFCVQCEQTIRTPAGNGCSYAQGMCGKTAETSDLQDLLIATLQGLSAWAVKAREYGIINHDVDSFAPRAFFSTLTNVNFDSPRIVGYAREAIALREALKAQCLAVDANARVDNPMADLQLVSDDLGELQRQAAEFTPNKDKAAIGENILGLRLLCLYGLKGAAAYMEHAHVLGQYDNDIYAQYHKIMAWLGTWPADMNALLECSMEIGQMNFKVMSILDAGETGKYGHPTPTQVNVKATAGKCILISGHDLKDLYNLLEQTEGTGVNVYTHGEMLPAHGYPELRKFKHLVGNYGSGWQNQQVEFARFPGPIVMTSNCIIDPTVGAYDDRIWTRSIVGWPGVRHLDGEDFSAVIAQAQQMAGFPYSEIPHLITVGFGRQTLLGAADTLIDLVSREKLRHIFLLGGCDGARGERHYFTDFATSVPDDCLILTLACGKYRFNKLEFGDIEGLPRLVDAGQCNDAYSAIILAVTLAEKLGCGVNDLPLSLVLSWFEQKAIVILLTLLSLGVKNIVTGPTAPGFLTPDLLAVLNEKFGLRSITTVEEDMKQLLSA</sequence>
<accession>Q8FJE0</accession>